<name>HBE1_CAPHI</name>
<sequence length="147" mass="16071">MVHFTAEEKAAITGLWGKVNVEEAGGEALGRLLVVYPWTQRFFDSFGNLSSASAIMGNPKVKAHGKKVLTSFGEAIKNLDNLKGAFAKLSELHCDKLHVDPENFRLLGNVIVIILATHFGREFTPDVQAAWQKLVSGVATALAHKYH</sequence>
<keyword id="KW-0349">Heme</keyword>
<keyword id="KW-0408">Iron</keyword>
<keyword id="KW-0479">Metal-binding</keyword>
<keyword id="KW-0561">Oxygen transport</keyword>
<keyword id="KW-1185">Reference proteome</keyword>
<keyword id="KW-0813">Transport</keyword>
<evidence type="ECO:0000255" key="1">
    <source>
        <dbReference type="PROSITE-ProRule" id="PRU00238"/>
    </source>
</evidence>
<evidence type="ECO:0000305" key="2"/>
<dbReference type="EMBL" id="X01912">
    <property type="protein sequence ID" value="CAA25986.1"/>
    <property type="molecule type" value="Genomic_DNA"/>
</dbReference>
<dbReference type="EMBL" id="K00666">
    <property type="protein sequence ID" value="AAA30922.1"/>
    <property type="molecule type" value="Genomic_DNA"/>
</dbReference>
<dbReference type="EMBL" id="K00665">
    <property type="protein sequence ID" value="AAA30922.1"/>
    <property type="status" value="JOINED"/>
    <property type="molecule type" value="Genomic_DNA"/>
</dbReference>
<dbReference type="PIR" id="A02423">
    <property type="entry name" value="HEGT1"/>
</dbReference>
<dbReference type="SMR" id="P02102"/>
<dbReference type="STRING" id="9925.ENSCHIP00000030285"/>
<dbReference type="Ensembl" id="ENSCHIT00000038156.1">
    <property type="protein sequence ID" value="ENSCHIP00000030285.1"/>
    <property type="gene ID" value="ENSCHIG00000024977.1"/>
</dbReference>
<dbReference type="Ensembl" id="ENSCHIT00020059944">
    <property type="protein sequence ID" value="ENSCHIP00020046287"/>
    <property type="gene ID" value="ENSCHIG00020028966"/>
</dbReference>
<dbReference type="Ensembl" id="ENSCHIT00040033595">
    <property type="protein sequence ID" value="ENSCHIP00040026673"/>
    <property type="gene ID" value="ENSCHIG00040015379"/>
</dbReference>
<dbReference type="GeneID" id="102174495"/>
<dbReference type="KEGG" id="chx:102174495"/>
<dbReference type="GeneTree" id="ENSGT00940000162659"/>
<dbReference type="OMA" id="ICGNPQV"/>
<dbReference type="OrthoDB" id="9886081at2759"/>
<dbReference type="Proteomes" id="UP000291000">
    <property type="component" value="Chromosome 15"/>
</dbReference>
<dbReference type="Proteomes" id="UP000694566">
    <property type="component" value="Unplaced"/>
</dbReference>
<dbReference type="Bgee" id="ENSCHIG00000024977">
    <property type="expression patterns" value="Expressed in testis"/>
</dbReference>
<dbReference type="GO" id="GO:0072562">
    <property type="term" value="C:blood microparticle"/>
    <property type="evidence" value="ECO:0007669"/>
    <property type="project" value="TreeGrafter"/>
</dbReference>
<dbReference type="GO" id="GO:0031838">
    <property type="term" value="C:haptoglobin-hemoglobin complex"/>
    <property type="evidence" value="ECO:0007669"/>
    <property type="project" value="TreeGrafter"/>
</dbReference>
<dbReference type="GO" id="GO:0005833">
    <property type="term" value="C:hemoglobin complex"/>
    <property type="evidence" value="ECO:0007669"/>
    <property type="project" value="InterPro"/>
</dbReference>
<dbReference type="GO" id="GO:0031720">
    <property type="term" value="F:haptoglobin binding"/>
    <property type="evidence" value="ECO:0007669"/>
    <property type="project" value="TreeGrafter"/>
</dbReference>
<dbReference type="GO" id="GO:0020037">
    <property type="term" value="F:heme binding"/>
    <property type="evidence" value="ECO:0007669"/>
    <property type="project" value="InterPro"/>
</dbReference>
<dbReference type="GO" id="GO:0031721">
    <property type="term" value="F:hemoglobin alpha binding"/>
    <property type="evidence" value="ECO:0007669"/>
    <property type="project" value="TreeGrafter"/>
</dbReference>
<dbReference type="GO" id="GO:0046872">
    <property type="term" value="F:metal ion binding"/>
    <property type="evidence" value="ECO:0007669"/>
    <property type="project" value="UniProtKB-KW"/>
</dbReference>
<dbReference type="GO" id="GO:0043177">
    <property type="term" value="F:organic acid binding"/>
    <property type="evidence" value="ECO:0007669"/>
    <property type="project" value="TreeGrafter"/>
</dbReference>
<dbReference type="GO" id="GO:0019825">
    <property type="term" value="F:oxygen binding"/>
    <property type="evidence" value="ECO:0007669"/>
    <property type="project" value="InterPro"/>
</dbReference>
<dbReference type="GO" id="GO:0005344">
    <property type="term" value="F:oxygen carrier activity"/>
    <property type="evidence" value="ECO:0007669"/>
    <property type="project" value="UniProtKB-KW"/>
</dbReference>
<dbReference type="GO" id="GO:0004601">
    <property type="term" value="F:peroxidase activity"/>
    <property type="evidence" value="ECO:0007669"/>
    <property type="project" value="TreeGrafter"/>
</dbReference>
<dbReference type="GO" id="GO:0042744">
    <property type="term" value="P:hydrogen peroxide catabolic process"/>
    <property type="evidence" value="ECO:0007669"/>
    <property type="project" value="TreeGrafter"/>
</dbReference>
<dbReference type="CDD" id="cd08925">
    <property type="entry name" value="Hb-beta-like"/>
    <property type="match status" value="1"/>
</dbReference>
<dbReference type="FunFam" id="1.10.490.10:FF:000001">
    <property type="entry name" value="Hemoglobin subunit beta"/>
    <property type="match status" value="1"/>
</dbReference>
<dbReference type="Gene3D" id="1.10.490.10">
    <property type="entry name" value="Globins"/>
    <property type="match status" value="1"/>
</dbReference>
<dbReference type="InterPro" id="IPR000971">
    <property type="entry name" value="Globin"/>
</dbReference>
<dbReference type="InterPro" id="IPR009050">
    <property type="entry name" value="Globin-like_sf"/>
</dbReference>
<dbReference type="InterPro" id="IPR012292">
    <property type="entry name" value="Globin/Proto"/>
</dbReference>
<dbReference type="InterPro" id="IPR002337">
    <property type="entry name" value="Hemoglobin_b"/>
</dbReference>
<dbReference type="InterPro" id="IPR050056">
    <property type="entry name" value="Hemoglobin_oxygen_transport"/>
</dbReference>
<dbReference type="PANTHER" id="PTHR11442">
    <property type="entry name" value="HEMOGLOBIN FAMILY MEMBER"/>
    <property type="match status" value="1"/>
</dbReference>
<dbReference type="PANTHER" id="PTHR11442:SF7">
    <property type="entry name" value="HEMOGLOBIN SUBUNIT EPSILON"/>
    <property type="match status" value="1"/>
</dbReference>
<dbReference type="Pfam" id="PF00042">
    <property type="entry name" value="Globin"/>
    <property type="match status" value="1"/>
</dbReference>
<dbReference type="PRINTS" id="PR00814">
    <property type="entry name" value="BETAHAEM"/>
</dbReference>
<dbReference type="SUPFAM" id="SSF46458">
    <property type="entry name" value="Globin-like"/>
    <property type="match status" value="1"/>
</dbReference>
<dbReference type="PROSITE" id="PS01033">
    <property type="entry name" value="GLOBIN"/>
    <property type="match status" value="1"/>
</dbReference>
<accession>P02102</accession>
<accession>Q28327</accession>
<reference key="1">
    <citation type="journal article" date="1983" name="J. Mol. Biol.">
        <title>Sequence and linkage of the goat epsilon I and epsilon II beta-globin genes.</title>
        <authorList>
            <person name="Shapiro S.G."/>
            <person name="Schon E.A."/>
            <person name="Townes T.M."/>
            <person name="Lingrel J.B."/>
        </authorList>
    </citation>
    <scope>NUCLEOTIDE SEQUENCE [GENOMIC DNA]</scope>
</reference>
<reference key="2">
    <citation type="journal article" date="1980" name="J. Biol. Chem.">
        <title>The isolation of the beta A-, beta C-, and gamma-globin genes and a presumptive embryonic globin gene from a goat DNA recombinant library.</title>
        <authorList>
            <person name="Haynes J.R."/>
            <person name="Rosteck P.R. Jr."/>
            <person name="Schon E.A."/>
            <person name="Gallagher P.M."/>
            <person name="Burks D.J."/>
            <person name="Smith K."/>
            <person name="Lingrel J.B."/>
        </authorList>
    </citation>
    <scope>NUCLEOTIDE SEQUENCE [GENOMIC DNA] OF 66-121</scope>
</reference>
<gene>
    <name type="primary">HBE1</name>
</gene>
<protein>
    <recommendedName>
        <fullName>Hemoglobin subunit epsilon-1</fullName>
    </recommendedName>
    <alternativeName>
        <fullName>Epsilon-1-globin</fullName>
    </alternativeName>
    <alternativeName>
        <fullName>Hemoglobin epsilon-1 chain</fullName>
    </alternativeName>
    <alternativeName>
        <fullName>Hemoglobin epsilon-I chain</fullName>
    </alternativeName>
</protein>
<feature type="chain" id="PRO_0000053198" description="Hemoglobin subunit epsilon-1">
    <location>
        <begin position="1"/>
        <end position="147"/>
    </location>
</feature>
<feature type="domain" description="Globin" evidence="1">
    <location>
        <begin position="3"/>
        <end position="147"/>
    </location>
</feature>
<feature type="binding site" description="distal binding residue" evidence="1">
    <location>
        <position position="64"/>
    </location>
    <ligand>
        <name>heme b</name>
        <dbReference type="ChEBI" id="CHEBI:60344"/>
    </ligand>
    <ligandPart>
        <name>Fe</name>
        <dbReference type="ChEBI" id="CHEBI:18248"/>
    </ligandPart>
</feature>
<feature type="binding site" description="proximal binding residue" evidence="1">
    <location>
        <position position="93"/>
    </location>
    <ligand>
        <name>heme b</name>
        <dbReference type="ChEBI" id="CHEBI:60344"/>
    </ligand>
    <ligandPart>
        <name>Fe</name>
        <dbReference type="ChEBI" id="CHEBI:18248"/>
    </ligandPart>
</feature>
<feature type="sequence conflict" description="In Ref. 2; AAA30922." evidence="2" ref="2">
    <original>K</original>
    <variation>E</variation>
    <location>
        <position position="88"/>
    </location>
</feature>
<feature type="sequence conflict" description="In Ref. 2; AAA30922." evidence="2" ref="2">
    <original>H</original>
    <variation>P</variation>
    <location>
        <position position="98"/>
    </location>
</feature>
<feature type="sequence conflict" description="In Ref. 2; AAA30922." evidence="2" ref="2">
    <original>EN</original>
    <variation>LD</variation>
    <location>
        <begin position="102"/>
        <end position="103"/>
    </location>
</feature>
<feature type="sequence conflict" description="In Ref. 2." evidence="2" ref="2">
    <original>LLGNVIVIILATHFGR</original>
    <variation>ALGQCDCDYSGYSFWQ</variation>
    <location>
        <begin position="106"/>
        <end position="121"/>
    </location>
</feature>
<proteinExistence type="evidence at transcript level"/>
<comment type="function">
    <text>Beta-type chain found in early embryos.</text>
</comment>
<comment type="subunit">
    <text>Heterotetramer of two epsilon chains and two alpha chains.</text>
</comment>
<comment type="tissue specificity">
    <text>Red blood cells.</text>
</comment>
<comment type="similarity">
    <text evidence="1">Belongs to the globin family.</text>
</comment>
<organism>
    <name type="scientific">Capra hircus</name>
    <name type="common">Goat</name>
    <dbReference type="NCBI Taxonomy" id="9925"/>
    <lineage>
        <taxon>Eukaryota</taxon>
        <taxon>Metazoa</taxon>
        <taxon>Chordata</taxon>
        <taxon>Craniata</taxon>
        <taxon>Vertebrata</taxon>
        <taxon>Euteleostomi</taxon>
        <taxon>Mammalia</taxon>
        <taxon>Eutheria</taxon>
        <taxon>Laurasiatheria</taxon>
        <taxon>Artiodactyla</taxon>
        <taxon>Ruminantia</taxon>
        <taxon>Pecora</taxon>
        <taxon>Bovidae</taxon>
        <taxon>Caprinae</taxon>
        <taxon>Capra</taxon>
    </lineage>
</organism>